<reference key="1">
    <citation type="submission" date="2008-08" db="EMBL/GenBank/DDBJ databases">
        <title>Complete sequence of Anaeromyxobacter sp. K.</title>
        <authorList>
            <consortium name="US DOE Joint Genome Institute"/>
            <person name="Lucas S."/>
            <person name="Copeland A."/>
            <person name="Lapidus A."/>
            <person name="Glavina del Rio T."/>
            <person name="Dalin E."/>
            <person name="Tice H."/>
            <person name="Bruce D."/>
            <person name="Goodwin L."/>
            <person name="Pitluck S."/>
            <person name="Saunders E."/>
            <person name="Brettin T."/>
            <person name="Detter J.C."/>
            <person name="Han C."/>
            <person name="Larimer F."/>
            <person name="Land M."/>
            <person name="Hauser L."/>
            <person name="Kyrpides N."/>
            <person name="Ovchinnikiva G."/>
            <person name="Beliaev A."/>
        </authorList>
    </citation>
    <scope>NUCLEOTIDE SEQUENCE [LARGE SCALE GENOMIC DNA]</scope>
    <source>
        <strain>K</strain>
    </source>
</reference>
<gene>
    <name evidence="1" type="primary">lysS</name>
    <name type="ordered locus">AnaeK_1137</name>
</gene>
<comment type="catalytic activity">
    <reaction evidence="1">
        <text>tRNA(Lys) + L-lysine + ATP = L-lysyl-tRNA(Lys) + AMP + diphosphate</text>
        <dbReference type="Rhea" id="RHEA:20792"/>
        <dbReference type="Rhea" id="RHEA-COMP:9696"/>
        <dbReference type="Rhea" id="RHEA-COMP:9697"/>
        <dbReference type="ChEBI" id="CHEBI:30616"/>
        <dbReference type="ChEBI" id="CHEBI:32551"/>
        <dbReference type="ChEBI" id="CHEBI:33019"/>
        <dbReference type="ChEBI" id="CHEBI:78442"/>
        <dbReference type="ChEBI" id="CHEBI:78529"/>
        <dbReference type="ChEBI" id="CHEBI:456215"/>
        <dbReference type="EC" id="6.1.1.6"/>
    </reaction>
</comment>
<comment type="cofactor">
    <cofactor evidence="1">
        <name>Mg(2+)</name>
        <dbReference type="ChEBI" id="CHEBI:18420"/>
    </cofactor>
    <text evidence="1">Binds 3 Mg(2+) ions per subunit.</text>
</comment>
<comment type="subunit">
    <text evidence="1">Homodimer.</text>
</comment>
<comment type="subcellular location">
    <subcellularLocation>
        <location evidence="1">Cytoplasm</location>
    </subcellularLocation>
</comment>
<comment type="similarity">
    <text evidence="1">Belongs to the class-II aminoacyl-tRNA synthetase family.</text>
</comment>
<feature type="chain" id="PRO_1000101096" description="Lysine--tRNA ligase">
    <location>
        <begin position="1"/>
        <end position="513"/>
    </location>
</feature>
<feature type="binding site" evidence="1">
    <location>
        <position position="423"/>
    </location>
    <ligand>
        <name>Mg(2+)</name>
        <dbReference type="ChEBI" id="CHEBI:18420"/>
        <label>1</label>
    </ligand>
</feature>
<feature type="binding site" evidence="1">
    <location>
        <position position="430"/>
    </location>
    <ligand>
        <name>Mg(2+)</name>
        <dbReference type="ChEBI" id="CHEBI:18420"/>
        <label>1</label>
    </ligand>
</feature>
<feature type="binding site" evidence="1">
    <location>
        <position position="430"/>
    </location>
    <ligand>
        <name>Mg(2+)</name>
        <dbReference type="ChEBI" id="CHEBI:18420"/>
        <label>2</label>
    </ligand>
</feature>
<evidence type="ECO:0000255" key="1">
    <source>
        <dbReference type="HAMAP-Rule" id="MF_00252"/>
    </source>
</evidence>
<proteinExistence type="inferred from homology"/>
<dbReference type="EC" id="6.1.1.6" evidence="1"/>
<dbReference type="EMBL" id="CP001131">
    <property type="protein sequence ID" value="ACG72370.1"/>
    <property type="molecule type" value="Genomic_DNA"/>
</dbReference>
<dbReference type="RefSeq" id="WP_012525196.1">
    <property type="nucleotide sequence ID" value="NC_011145.1"/>
</dbReference>
<dbReference type="SMR" id="B4UGU5"/>
<dbReference type="KEGG" id="ank:AnaeK_1137"/>
<dbReference type="HOGENOM" id="CLU_008255_6_0_7"/>
<dbReference type="OrthoDB" id="9802326at2"/>
<dbReference type="Proteomes" id="UP000001871">
    <property type="component" value="Chromosome"/>
</dbReference>
<dbReference type="GO" id="GO:0005829">
    <property type="term" value="C:cytosol"/>
    <property type="evidence" value="ECO:0007669"/>
    <property type="project" value="TreeGrafter"/>
</dbReference>
<dbReference type="GO" id="GO:0005524">
    <property type="term" value="F:ATP binding"/>
    <property type="evidence" value="ECO:0007669"/>
    <property type="project" value="UniProtKB-UniRule"/>
</dbReference>
<dbReference type="GO" id="GO:0004824">
    <property type="term" value="F:lysine-tRNA ligase activity"/>
    <property type="evidence" value="ECO:0007669"/>
    <property type="project" value="UniProtKB-UniRule"/>
</dbReference>
<dbReference type="GO" id="GO:0000287">
    <property type="term" value="F:magnesium ion binding"/>
    <property type="evidence" value="ECO:0007669"/>
    <property type="project" value="UniProtKB-UniRule"/>
</dbReference>
<dbReference type="GO" id="GO:0000049">
    <property type="term" value="F:tRNA binding"/>
    <property type="evidence" value="ECO:0007669"/>
    <property type="project" value="TreeGrafter"/>
</dbReference>
<dbReference type="GO" id="GO:0006430">
    <property type="term" value="P:lysyl-tRNA aminoacylation"/>
    <property type="evidence" value="ECO:0007669"/>
    <property type="project" value="UniProtKB-UniRule"/>
</dbReference>
<dbReference type="CDD" id="cd00775">
    <property type="entry name" value="LysRS_core"/>
    <property type="match status" value="1"/>
</dbReference>
<dbReference type="CDD" id="cd04322">
    <property type="entry name" value="LysRS_N"/>
    <property type="match status" value="1"/>
</dbReference>
<dbReference type="FunFam" id="2.40.50.140:FF:000024">
    <property type="entry name" value="Lysine--tRNA ligase"/>
    <property type="match status" value="1"/>
</dbReference>
<dbReference type="Gene3D" id="3.30.930.10">
    <property type="entry name" value="Bira Bifunctional Protein, Domain 2"/>
    <property type="match status" value="1"/>
</dbReference>
<dbReference type="Gene3D" id="2.40.50.140">
    <property type="entry name" value="Nucleic acid-binding proteins"/>
    <property type="match status" value="1"/>
</dbReference>
<dbReference type="HAMAP" id="MF_00252">
    <property type="entry name" value="Lys_tRNA_synth_class2"/>
    <property type="match status" value="1"/>
</dbReference>
<dbReference type="InterPro" id="IPR004364">
    <property type="entry name" value="Aa-tRNA-synt_II"/>
</dbReference>
<dbReference type="InterPro" id="IPR006195">
    <property type="entry name" value="aa-tRNA-synth_II"/>
</dbReference>
<dbReference type="InterPro" id="IPR045864">
    <property type="entry name" value="aa-tRNA-synth_II/BPL/LPL"/>
</dbReference>
<dbReference type="InterPro" id="IPR002313">
    <property type="entry name" value="Lys-tRNA-ligase_II"/>
</dbReference>
<dbReference type="InterPro" id="IPR044136">
    <property type="entry name" value="Lys-tRNA-ligase_II_N"/>
</dbReference>
<dbReference type="InterPro" id="IPR018149">
    <property type="entry name" value="Lys-tRNA-synth_II_C"/>
</dbReference>
<dbReference type="InterPro" id="IPR012340">
    <property type="entry name" value="NA-bd_OB-fold"/>
</dbReference>
<dbReference type="InterPro" id="IPR004365">
    <property type="entry name" value="NA-bd_OB_tRNA"/>
</dbReference>
<dbReference type="NCBIfam" id="TIGR00499">
    <property type="entry name" value="lysS_bact"/>
    <property type="match status" value="1"/>
</dbReference>
<dbReference type="NCBIfam" id="NF001756">
    <property type="entry name" value="PRK00484.1"/>
    <property type="match status" value="1"/>
</dbReference>
<dbReference type="PANTHER" id="PTHR42918:SF15">
    <property type="entry name" value="LYSINE--TRNA LIGASE, CHLOROPLASTIC_MITOCHONDRIAL"/>
    <property type="match status" value="1"/>
</dbReference>
<dbReference type="PANTHER" id="PTHR42918">
    <property type="entry name" value="LYSYL-TRNA SYNTHETASE"/>
    <property type="match status" value="1"/>
</dbReference>
<dbReference type="Pfam" id="PF00152">
    <property type="entry name" value="tRNA-synt_2"/>
    <property type="match status" value="1"/>
</dbReference>
<dbReference type="Pfam" id="PF01336">
    <property type="entry name" value="tRNA_anti-codon"/>
    <property type="match status" value="1"/>
</dbReference>
<dbReference type="PRINTS" id="PR00982">
    <property type="entry name" value="TRNASYNTHLYS"/>
</dbReference>
<dbReference type="SUPFAM" id="SSF55681">
    <property type="entry name" value="Class II aaRS and biotin synthetases"/>
    <property type="match status" value="1"/>
</dbReference>
<dbReference type="SUPFAM" id="SSF50249">
    <property type="entry name" value="Nucleic acid-binding proteins"/>
    <property type="match status" value="1"/>
</dbReference>
<dbReference type="PROSITE" id="PS50862">
    <property type="entry name" value="AA_TRNA_LIGASE_II"/>
    <property type="match status" value="1"/>
</dbReference>
<name>SYK_ANASK</name>
<organism>
    <name type="scientific">Anaeromyxobacter sp. (strain K)</name>
    <dbReference type="NCBI Taxonomy" id="447217"/>
    <lineage>
        <taxon>Bacteria</taxon>
        <taxon>Pseudomonadati</taxon>
        <taxon>Myxococcota</taxon>
        <taxon>Myxococcia</taxon>
        <taxon>Myxococcales</taxon>
        <taxon>Cystobacterineae</taxon>
        <taxon>Anaeromyxobacteraceae</taxon>
        <taxon>Anaeromyxobacter</taxon>
    </lineage>
</organism>
<keyword id="KW-0030">Aminoacyl-tRNA synthetase</keyword>
<keyword id="KW-0067">ATP-binding</keyword>
<keyword id="KW-0963">Cytoplasm</keyword>
<keyword id="KW-0436">Ligase</keyword>
<keyword id="KW-0460">Magnesium</keyword>
<keyword id="KW-0479">Metal-binding</keyword>
<keyword id="KW-0547">Nucleotide-binding</keyword>
<keyword id="KW-0648">Protein biosynthesis</keyword>
<sequence length="513" mass="57295">MADELGTTEREIIAQRLKKAEALRALGVNPFGNGWQPRHLADELLRHYGDQPAEEIAKDPGDWSLAGRVLAVRSFGKAAFLRVRDRSAELQVWVKKDRVGEQAFEVFKLLDIGDIVGAEGPATRTKTGELTLEARTFTILTKATRPLPEKWHGLTDVEQRYRQRYVDLVVTPGVREAFVKRARIVSGIRRFLDARGYLEVETPTLHKPEEAGGAAARPFETHHNALDLDLKLRIATELHLKRLVVGGLDRVYEIGRIWRNEGIDRRHNPEFTSIEFYQAYATHEDLMRLTEELMHRLAVEVTGGPVVTFQGQAIDLTPPFPRVSMLEVGARALGLSPDDALAGRGLAEALSRAAARENDSEDAWKLEQAAKKTPGEAVALAFEIFGEPQLPKDRPAFVVDFPLETSPLSRRRDADPRLVDRFELFAAGMELANAFSELNDPADQRARFEAQMRAKAAGDEEAMPYDEDFVRALEHGMPPTAGEGIGIDRLAMLFTDSASIRDVILFPLLKSRD</sequence>
<protein>
    <recommendedName>
        <fullName evidence="1">Lysine--tRNA ligase</fullName>
        <ecNumber evidence="1">6.1.1.6</ecNumber>
    </recommendedName>
    <alternativeName>
        <fullName evidence="1">Lysyl-tRNA synthetase</fullName>
        <shortName evidence="1">LysRS</shortName>
    </alternativeName>
</protein>
<accession>B4UGU5</accession>